<keyword id="KW-0067">ATP-binding</keyword>
<keyword id="KW-0547">Nucleotide-binding</keyword>
<keyword id="KW-0346">Stress response</keyword>
<gene>
    <name type="primary">HSP70</name>
</gene>
<organism>
    <name type="scientific">Leishmania braziliensis</name>
    <dbReference type="NCBI Taxonomy" id="5660"/>
    <lineage>
        <taxon>Eukaryota</taxon>
        <taxon>Discoba</taxon>
        <taxon>Euglenozoa</taxon>
        <taxon>Kinetoplastea</taxon>
        <taxon>Metakinetoplastina</taxon>
        <taxon>Trypanosomatida</taxon>
        <taxon>Trypanosomatidae</taxon>
        <taxon>Leishmaniinae</taxon>
        <taxon>Leishmania</taxon>
        <taxon>Leishmania braziliensis species complex</taxon>
    </lineage>
</organism>
<proteinExistence type="evidence at transcript level"/>
<dbReference type="EMBL" id="X62485">
    <property type="protein sequence ID" value="CAA44351.1"/>
    <property type="molecule type" value="mRNA"/>
</dbReference>
<dbReference type="PIR" id="S17349">
    <property type="entry name" value="S17349"/>
</dbReference>
<dbReference type="SMR" id="P27894"/>
<dbReference type="VEuPathDB" id="TriTrypDB:LbrM.28.2990"/>
<dbReference type="GO" id="GO:0005524">
    <property type="term" value="F:ATP binding"/>
    <property type="evidence" value="ECO:0007669"/>
    <property type="project" value="UniProtKB-KW"/>
</dbReference>
<dbReference type="GO" id="GO:0140662">
    <property type="term" value="F:ATP-dependent protein folding chaperone"/>
    <property type="evidence" value="ECO:0007669"/>
    <property type="project" value="InterPro"/>
</dbReference>
<dbReference type="FunFam" id="1.20.1270.10:FF:000055">
    <property type="entry name" value="Heat shock 70 kDa protein"/>
    <property type="match status" value="1"/>
</dbReference>
<dbReference type="FunFam" id="2.60.34.10:FF:000012">
    <property type="entry name" value="Heat shock 70 kDa protein"/>
    <property type="match status" value="1"/>
</dbReference>
<dbReference type="Gene3D" id="1.20.1270.10">
    <property type="match status" value="1"/>
</dbReference>
<dbReference type="Gene3D" id="2.60.34.10">
    <property type="entry name" value="Substrate Binding Domain Of DNAk, Chain A, domain 1"/>
    <property type="match status" value="1"/>
</dbReference>
<dbReference type="InterPro" id="IPR029048">
    <property type="entry name" value="HSP70_C_sf"/>
</dbReference>
<dbReference type="InterPro" id="IPR029047">
    <property type="entry name" value="HSP70_peptide-bd_sf"/>
</dbReference>
<dbReference type="InterPro" id="IPR013126">
    <property type="entry name" value="Hsp_70_fam"/>
</dbReference>
<dbReference type="PANTHER" id="PTHR19375">
    <property type="entry name" value="HEAT SHOCK PROTEIN 70KDA"/>
    <property type="match status" value="1"/>
</dbReference>
<dbReference type="Pfam" id="PF00012">
    <property type="entry name" value="HSP70"/>
    <property type="match status" value="1"/>
</dbReference>
<dbReference type="SUPFAM" id="SSF100934">
    <property type="entry name" value="Heat shock protein 70kD (HSP70), C-terminal subdomain"/>
    <property type="match status" value="1"/>
</dbReference>
<dbReference type="SUPFAM" id="SSF100920">
    <property type="entry name" value="Heat shock protein 70kD (HSP70), peptide-binding domain"/>
    <property type="match status" value="1"/>
</dbReference>
<sequence>KSQIFSTYADNQPGVHIQVFEGERAMTKDCHLLGTFDLSAIPPAPRGVPQIEVTFDLDANGILNVSAEEKGTGKRNHITITNDKGRLSKDEIERMVNDASKYEQADKMQRDALEAKNGLENYAYSMKNTVSDTNVSGKLEESDRSALNLAIDTALEWLNSNQEASKEEYEHRQKELESTCNPIMTKMYQSMGGGAGGMPGGMPDMSGMGGGQGPAAGASSGPKVEEVD</sequence>
<comment type="similarity">
    <text evidence="2">Belongs to the heat shock protein 70 family.</text>
</comment>
<reference key="1">
    <citation type="journal article" date="1992" name="Immunol. Lett.">
        <title>The 70-kDa heat-shock protein is a major antigenic determinant in human Trypanosoma cruzi/Leishmania braziliensis braziliensis mixed infection.</title>
        <authorList>
            <person name="Levy Yeyati P."/>
            <person name="Bonnefoy S."/>
            <person name="Mirkin G."/>
            <person name="Debrabant A."/>
            <person name="Lafon S."/>
            <person name="Panebra A."/>
            <person name="Gonzalez-Cappa E."/>
            <person name="Dedet J.P."/>
            <person name="Hontebeyrie-Joskowicz M."/>
            <person name="Levin M.J."/>
        </authorList>
    </citation>
    <scope>NUCLEOTIDE SEQUENCE [MRNA]</scope>
    <source>
        <strain>Boytron</strain>
    </source>
</reference>
<evidence type="ECO:0000256" key="1">
    <source>
        <dbReference type="SAM" id="MobiDB-lite"/>
    </source>
</evidence>
<evidence type="ECO:0000305" key="2"/>
<name>HSP70_LEIBR</name>
<protein>
    <recommendedName>
        <fullName>Heat shock 70 kDa protein</fullName>
        <shortName>HSP 70</shortName>
    </recommendedName>
</protein>
<accession>P27894</accession>
<feature type="chain" id="PRO_0000078303" description="Heat shock 70 kDa protein">
    <location>
        <begin position="1" status="less than"/>
        <end position="228"/>
    </location>
</feature>
<feature type="region of interest" description="Disordered" evidence="1">
    <location>
        <begin position="191"/>
        <end position="228"/>
    </location>
</feature>
<feature type="compositionally biased region" description="Gly residues" evidence="1">
    <location>
        <begin position="191"/>
        <end position="200"/>
    </location>
</feature>
<feature type="non-terminal residue">
    <location>
        <position position="1"/>
    </location>
</feature>